<dbReference type="EC" id="2.7.11.1"/>
<dbReference type="EMBL" id="AB016886">
    <property type="protein sequence ID" value="BAB11332.1"/>
    <property type="molecule type" value="Genomic_DNA"/>
</dbReference>
<dbReference type="EMBL" id="CP002688">
    <property type="protein sequence ID" value="AED95580.1"/>
    <property type="molecule type" value="Genomic_DNA"/>
</dbReference>
<dbReference type="EMBL" id="AY078947">
    <property type="status" value="NOT_ANNOTATED_CDS"/>
    <property type="molecule type" value="mRNA"/>
</dbReference>
<dbReference type="RefSeq" id="NP_199596.1">
    <property type="nucleotide sequence ID" value="NM_124159.3"/>
</dbReference>
<dbReference type="SMR" id="Q9FIJ6"/>
<dbReference type="FunCoup" id="Q9FIJ6">
    <property type="interactions" value="684"/>
</dbReference>
<dbReference type="STRING" id="3702.Q9FIJ6"/>
<dbReference type="GlyCosmos" id="Q9FIJ6">
    <property type="glycosylation" value="7 sites, No reported glycans"/>
</dbReference>
<dbReference type="GlyGen" id="Q9FIJ6">
    <property type="glycosylation" value="7 sites"/>
</dbReference>
<dbReference type="PaxDb" id="3702-AT5G47850.1"/>
<dbReference type="EnsemblPlants" id="AT5G47850.1">
    <property type="protein sequence ID" value="AT5G47850.1"/>
    <property type="gene ID" value="AT5G47850"/>
</dbReference>
<dbReference type="GeneID" id="834836"/>
<dbReference type="Gramene" id="AT5G47850.1">
    <property type="protein sequence ID" value="AT5G47850.1"/>
    <property type="gene ID" value="AT5G47850"/>
</dbReference>
<dbReference type="KEGG" id="ath:AT5G47850"/>
<dbReference type="Araport" id="AT5G47850"/>
<dbReference type="TAIR" id="AT5G47850">
    <property type="gene designation" value="CCR4"/>
</dbReference>
<dbReference type="eggNOG" id="KOG1187">
    <property type="taxonomic scope" value="Eukaryota"/>
</dbReference>
<dbReference type="HOGENOM" id="CLU_009948_1_1_1"/>
<dbReference type="InParanoid" id="Q9FIJ6"/>
<dbReference type="OMA" id="HVCGLVN"/>
<dbReference type="PhylomeDB" id="Q9FIJ6"/>
<dbReference type="PRO" id="PR:Q9FIJ6"/>
<dbReference type="Proteomes" id="UP000006548">
    <property type="component" value="Chromosome 5"/>
</dbReference>
<dbReference type="ExpressionAtlas" id="Q9FIJ6">
    <property type="expression patterns" value="baseline and differential"/>
</dbReference>
<dbReference type="GO" id="GO:0016020">
    <property type="term" value="C:membrane"/>
    <property type="evidence" value="ECO:0007669"/>
    <property type="project" value="UniProtKB-SubCell"/>
</dbReference>
<dbReference type="GO" id="GO:0005524">
    <property type="term" value="F:ATP binding"/>
    <property type="evidence" value="ECO:0007669"/>
    <property type="project" value="UniProtKB-KW"/>
</dbReference>
<dbReference type="GO" id="GO:0042803">
    <property type="term" value="F:protein homodimerization activity"/>
    <property type="evidence" value="ECO:0000314"/>
    <property type="project" value="UniProtKB"/>
</dbReference>
<dbReference type="GO" id="GO:0004672">
    <property type="term" value="F:protein kinase activity"/>
    <property type="evidence" value="ECO:0000314"/>
    <property type="project" value="UniProtKB"/>
</dbReference>
<dbReference type="GO" id="GO:0106310">
    <property type="term" value="F:protein serine kinase activity"/>
    <property type="evidence" value="ECO:0007669"/>
    <property type="project" value="RHEA"/>
</dbReference>
<dbReference type="GO" id="GO:0004674">
    <property type="term" value="F:protein serine/threonine kinase activity"/>
    <property type="evidence" value="ECO:0007669"/>
    <property type="project" value="UniProtKB-KW"/>
</dbReference>
<dbReference type="CDD" id="cd14066">
    <property type="entry name" value="STKc_IRAK"/>
    <property type="match status" value="1"/>
</dbReference>
<dbReference type="FunFam" id="2.130.10.30:FF:000106">
    <property type="match status" value="1"/>
</dbReference>
<dbReference type="FunFam" id="1.10.510.10:FF:000569">
    <property type="entry name" value="Serine/threonine-protein kinase-like protein CCR4"/>
    <property type="match status" value="1"/>
</dbReference>
<dbReference type="Gene3D" id="3.30.200.20">
    <property type="entry name" value="Phosphorylase Kinase, domain 1"/>
    <property type="match status" value="1"/>
</dbReference>
<dbReference type="Gene3D" id="2.130.10.30">
    <property type="entry name" value="Regulator of chromosome condensation 1/beta-lactamase-inhibitor protein II"/>
    <property type="match status" value="1"/>
</dbReference>
<dbReference type="Gene3D" id="1.10.510.10">
    <property type="entry name" value="Transferase(Phosphotransferase) domain 1"/>
    <property type="match status" value="1"/>
</dbReference>
<dbReference type="InterPro" id="IPR011009">
    <property type="entry name" value="Kinase-like_dom_sf"/>
</dbReference>
<dbReference type="InterPro" id="IPR000719">
    <property type="entry name" value="Prot_kinase_dom"/>
</dbReference>
<dbReference type="InterPro" id="IPR017441">
    <property type="entry name" value="Protein_kinase_ATP_BS"/>
</dbReference>
<dbReference type="InterPro" id="IPR009091">
    <property type="entry name" value="RCC1/BLIP-II"/>
</dbReference>
<dbReference type="InterPro" id="IPR008271">
    <property type="entry name" value="Ser/Thr_kinase_AS"/>
</dbReference>
<dbReference type="PANTHER" id="PTHR46146">
    <property type="entry name" value="SERINE/THREONINE-PROTEIN KINASE-LIKE PROTEIN CCR4"/>
    <property type="match status" value="1"/>
</dbReference>
<dbReference type="PANTHER" id="PTHR46146:SF4">
    <property type="entry name" value="SERINE_THREONINE-PROTEIN KINASE-LIKE PROTEIN CCR4"/>
    <property type="match status" value="1"/>
</dbReference>
<dbReference type="Pfam" id="PF00069">
    <property type="entry name" value="Pkinase"/>
    <property type="match status" value="1"/>
</dbReference>
<dbReference type="SMART" id="SM00220">
    <property type="entry name" value="S_TKc"/>
    <property type="match status" value="1"/>
</dbReference>
<dbReference type="SUPFAM" id="SSF56112">
    <property type="entry name" value="Protein kinase-like (PK-like)"/>
    <property type="match status" value="1"/>
</dbReference>
<dbReference type="SUPFAM" id="SSF50985">
    <property type="entry name" value="RCC1/BLIP-II"/>
    <property type="match status" value="1"/>
</dbReference>
<dbReference type="PROSITE" id="PS00107">
    <property type="entry name" value="PROTEIN_KINASE_ATP"/>
    <property type="match status" value="1"/>
</dbReference>
<dbReference type="PROSITE" id="PS50011">
    <property type="entry name" value="PROTEIN_KINASE_DOM"/>
    <property type="match status" value="1"/>
</dbReference>
<dbReference type="PROSITE" id="PS00108">
    <property type="entry name" value="PROTEIN_KINASE_ST"/>
    <property type="match status" value="1"/>
</dbReference>
<accession>Q9FIJ6</accession>
<organism>
    <name type="scientific">Arabidopsis thaliana</name>
    <name type="common">Mouse-ear cress</name>
    <dbReference type="NCBI Taxonomy" id="3702"/>
    <lineage>
        <taxon>Eukaryota</taxon>
        <taxon>Viridiplantae</taxon>
        <taxon>Streptophyta</taxon>
        <taxon>Embryophyta</taxon>
        <taxon>Tracheophyta</taxon>
        <taxon>Spermatophyta</taxon>
        <taxon>Magnoliopsida</taxon>
        <taxon>eudicotyledons</taxon>
        <taxon>Gunneridae</taxon>
        <taxon>Pentapetalae</taxon>
        <taxon>rosids</taxon>
        <taxon>malvids</taxon>
        <taxon>Brassicales</taxon>
        <taxon>Brassicaceae</taxon>
        <taxon>Camelineae</taxon>
        <taxon>Arabidopsis</taxon>
    </lineage>
</organism>
<proteinExistence type="evidence at protein level"/>
<reference key="1">
    <citation type="journal article" date="1998" name="DNA Res.">
        <title>Structural analysis of Arabidopsis thaliana chromosome 5. VIII. Sequence features of the regions of 1,081,958 bp covered by seventeen physically assigned P1 and TAC clones.</title>
        <authorList>
            <person name="Asamizu E."/>
            <person name="Sato S."/>
            <person name="Kaneko T."/>
            <person name="Nakamura Y."/>
            <person name="Kotani H."/>
            <person name="Miyajima N."/>
            <person name="Tabata S."/>
        </authorList>
    </citation>
    <scope>NUCLEOTIDE SEQUENCE [LARGE SCALE GENOMIC DNA]</scope>
    <source>
        <strain>cv. Columbia</strain>
    </source>
</reference>
<reference key="2">
    <citation type="journal article" date="2017" name="Plant J.">
        <title>Araport11: a complete reannotation of the Arabidopsis thaliana reference genome.</title>
        <authorList>
            <person name="Cheng C.Y."/>
            <person name="Krishnakumar V."/>
            <person name="Chan A.P."/>
            <person name="Thibaud-Nissen F."/>
            <person name="Schobel S."/>
            <person name="Town C.D."/>
        </authorList>
    </citation>
    <scope>GENOME REANNOTATION</scope>
    <source>
        <strain>cv. Columbia</strain>
    </source>
</reference>
<reference key="3">
    <citation type="journal article" date="2003" name="Science">
        <title>Empirical analysis of transcriptional activity in the Arabidopsis genome.</title>
        <authorList>
            <person name="Yamada K."/>
            <person name="Lim J."/>
            <person name="Dale J.M."/>
            <person name="Chen H."/>
            <person name="Shinn P."/>
            <person name="Palm C.J."/>
            <person name="Southwick A.M."/>
            <person name="Wu H.C."/>
            <person name="Kim C.J."/>
            <person name="Nguyen M."/>
            <person name="Pham P.K."/>
            <person name="Cheuk R.F."/>
            <person name="Karlin-Newmann G."/>
            <person name="Liu S.X."/>
            <person name="Lam B."/>
            <person name="Sakano H."/>
            <person name="Wu T."/>
            <person name="Yu G."/>
            <person name="Miranda M."/>
            <person name="Quach H.L."/>
            <person name="Tripp M."/>
            <person name="Chang C.H."/>
            <person name="Lee J.M."/>
            <person name="Toriumi M.J."/>
            <person name="Chan M.M."/>
            <person name="Tang C.C."/>
            <person name="Onodera C.S."/>
            <person name="Deng J.M."/>
            <person name="Akiyama K."/>
            <person name="Ansari Y."/>
            <person name="Arakawa T."/>
            <person name="Banh J."/>
            <person name="Banno F."/>
            <person name="Bowser L."/>
            <person name="Brooks S.Y."/>
            <person name="Carninci P."/>
            <person name="Chao Q."/>
            <person name="Choy N."/>
            <person name="Enju A."/>
            <person name="Goldsmith A.D."/>
            <person name="Gurjal M."/>
            <person name="Hansen N.F."/>
            <person name="Hayashizaki Y."/>
            <person name="Johnson-Hopson C."/>
            <person name="Hsuan V.W."/>
            <person name="Iida K."/>
            <person name="Karnes M."/>
            <person name="Khan S."/>
            <person name="Koesema E."/>
            <person name="Ishida J."/>
            <person name="Jiang P.X."/>
            <person name="Jones T."/>
            <person name="Kawai J."/>
            <person name="Kamiya A."/>
            <person name="Meyers C."/>
            <person name="Nakajima M."/>
            <person name="Narusaka M."/>
            <person name="Seki M."/>
            <person name="Sakurai T."/>
            <person name="Satou M."/>
            <person name="Tamse R."/>
            <person name="Vaysberg M."/>
            <person name="Wallender E.K."/>
            <person name="Wong C."/>
            <person name="Yamamura Y."/>
            <person name="Yuan S."/>
            <person name="Shinozaki K."/>
            <person name="Davis R.W."/>
            <person name="Theologis A."/>
            <person name="Ecker J.R."/>
        </authorList>
    </citation>
    <scope>NUCLEOTIDE SEQUENCE [LARGE SCALE MRNA]</scope>
    <source>
        <strain>cv. Columbia</strain>
    </source>
</reference>
<reference key="4">
    <citation type="journal article" date="2005" name="Planta">
        <title>Molecular analysis of the CRINKLY4 gene family in Arabidopsis thaliana.</title>
        <authorList>
            <person name="Cao X."/>
            <person name="Li K."/>
            <person name="Suh S.-G."/>
            <person name="Guo T."/>
            <person name="Becraft P.W."/>
        </authorList>
    </citation>
    <scope>GENE FAMILY</scope>
    <scope>CATALYTIC ACTIVITY</scope>
    <scope>TISSUE SPECIFICITY</scope>
</reference>
<reference key="5">
    <citation type="journal article" date="2008" name="Arch. Biochem. Biophys.">
        <title>Dimerization properties of the transmembrane domains of Arabidopsis CRINKLY4 receptor-like kinase and homologs.</title>
        <authorList>
            <person name="Stokes K.D."/>
            <person name="Gururaj Rao A."/>
        </authorList>
    </citation>
    <scope>HOMODIMERIZATION</scope>
</reference>
<reference key="6">
    <citation type="journal article" date="2009" name="Mol. Plant">
        <title>Diverse transcriptional programs associated with environmental stress and hormones in the Arabidopsis receptor-like kinase gene family.</title>
        <authorList>
            <person name="Chae L."/>
            <person name="Sudat S."/>
            <person name="Dudoit S."/>
            <person name="Zhu T."/>
            <person name="Luan S."/>
        </authorList>
    </citation>
    <scope>GENE FAMILY</scope>
</reference>
<sequence length="751" mass="83774">MALTISISCFSSYFVSLLLLVLSSFSFVCFSLSTVSISHISNQTLVCALNNHSYLQCSSFPLNSIPFSLTGNLRNRRFSGVVSGNGFVCGLISRLDSNTSTLLCWRFSVDGTNMLHKRIYHGPELEELEAGNFRICGVERVSRRLRCWQPYYLPRPDNYRSIALGDNFFCGLSQPPGMISCEGIAKVPSGDHYIAIAAGSRQACAITVDNDVECWGQTQSLPREKFLALAVGEDRGCGVRWSNGTVVCWGNNNNFSLPQTLKDIHFTSIYAKGPMFCGVATRNYTLICWGNENFKSGVFTPFQGLISQVVMPGPCRRECPYRPLSGSQSLCGNELMICDLKRNDGEFPDTRAQNSKNKTWSRRNIAFLVVGCVGTFSLLLVISFLIFKSHCRCRVHDSGRLDDTRTIDIPKLEKRLCTLASLGNPGQLMEFSIDELALATDGFSVRFHLGIGSFGSVYQGVLSDGRHVAIKRAELTNPTLSGTTMRHRRADKDSAFVNELESMSRLNHKNLVRLLGFYEDTEERILVYEYMKNGSLADHLHNPQFDPLSWQTRLMIALDAARGIQYLHEFIVPPVIHRDIKSSNILLDATWTAKVSDFGLSQMGPTEEDDVSHLSLHAAGTLGYIDPEYYKFQQLTTKSDVYSFGVVLLELLSGHKAIHNNEDENPRNLVEYVVPYILLDEAHRILDQRIPPPTPYEIEAVAHVGYLAAECLMPCSRKRPSMVEVVSKLESALAACLTAPKTETVSRSNTY</sequence>
<feature type="signal peptide" evidence="1">
    <location>
        <begin position="1"/>
        <end position="31"/>
    </location>
</feature>
<feature type="chain" id="PRO_0000382749" description="Serine/threonine-protein kinase-like protein CCR4">
    <location>
        <begin position="32"/>
        <end position="751"/>
    </location>
</feature>
<feature type="topological domain" description="Extracellular" evidence="1">
    <location>
        <begin position="32"/>
        <end position="366"/>
    </location>
</feature>
<feature type="transmembrane region" description="Helical" evidence="1">
    <location>
        <begin position="367"/>
        <end position="387"/>
    </location>
</feature>
<feature type="topological domain" description="Cytoplasmic" evidence="1">
    <location>
        <begin position="388"/>
        <end position="751"/>
    </location>
</feature>
<feature type="domain" description="Protein kinase" evidence="2">
    <location>
        <begin position="443"/>
        <end position="733"/>
    </location>
</feature>
<feature type="active site" description="Proton acceptor" evidence="2 3">
    <location>
        <position position="579"/>
    </location>
</feature>
<feature type="binding site" evidence="2">
    <location>
        <begin position="449"/>
        <end position="457"/>
    </location>
    <ligand>
        <name>ATP</name>
        <dbReference type="ChEBI" id="CHEBI:30616"/>
    </ligand>
</feature>
<feature type="binding site" evidence="2">
    <location>
        <position position="471"/>
    </location>
    <ligand>
        <name>ATP</name>
        <dbReference type="ChEBI" id="CHEBI:30616"/>
    </ligand>
</feature>
<feature type="glycosylation site" description="N-linked (GlcNAc...) asparagine" evidence="1">
    <location>
        <position position="42"/>
    </location>
</feature>
<feature type="glycosylation site" description="N-linked (GlcNAc...) asparagine" evidence="1">
    <location>
        <position position="51"/>
    </location>
</feature>
<feature type="glycosylation site" description="N-linked (GlcNAc...) asparagine" evidence="1">
    <location>
        <position position="98"/>
    </location>
</feature>
<feature type="glycosylation site" description="N-linked (GlcNAc...) asparagine" evidence="1">
    <location>
        <position position="243"/>
    </location>
</feature>
<feature type="glycosylation site" description="N-linked (GlcNAc...) asparagine" evidence="1">
    <location>
        <position position="254"/>
    </location>
</feature>
<feature type="glycosylation site" description="N-linked (GlcNAc...) asparagine" evidence="1">
    <location>
        <position position="283"/>
    </location>
</feature>
<feature type="glycosylation site" description="N-linked (GlcNAc...) asparagine" evidence="1">
    <location>
        <position position="357"/>
    </location>
</feature>
<feature type="sequence conflict" description="In Ref. 3; AY078947." evidence="5" ref="3">
    <location>
        <position position="327"/>
    </location>
</feature>
<evidence type="ECO:0000255" key="1"/>
<evidence type="ECO:0000255" key="2">
    <source>
        <dbReference type="PROSITE-ProRule" id="PRU00159"/>
    </source>
</evidence>
<evidence type="ECO:0000255" key="3">
    <source>
        <dbReference type="PROSITE-ProRule" id="PRU10027"/>
    </source>
</evidence>
<evidence type="ECO:0000269" key="4">
    <source>
    </source>
</evidence>
<evidence type="ECO:0000305" key="5"/>
<comment type="catalytic activity">
    <reaction evidence="4">
        <text>L-seryl-[protein] + ATP = O-phospho-L-seryl-[protein] + ADP + H(+)</text>
        <dbReference type="Rhea" id="RHEA:17989"/>
        <dbReference type="Rhea" id="RHEA-COMP:9863"/>
        <dbReference type="Rhea" id="RHEA-COMP:11604"/>
        <dbReference type="ChEBI" id="CHEBI:15378"/>
        <dbReference type="ChEBI" id="CHEBI:29999"/>
        <dbReference type="ChEBI" id="CHEBI:30616"/>
        <dbReference type="ChEBI" id="CHEBI:83421"/>
        <dbReference type="ChEBI" id="CHEBI:456216"/>
        <dbReference type="EC" id="2.7.11.1"/>
    </reaction>
</comment>
<comment type="catalytic activity">
    <reaction evidence="4">
        <text>L-threonyl-[protein] + ATP = O-phospho-L-threonyl-[protein] + ADP + H(+)</text>
        <dbReference type="Rhea" id="RHEA:46608"/>
        <dbReference type="Rhea" id="RHEA-COMP:11060"/>
        <dbReference type="Rhea" id="RHEA-COMP:11605"/>
        <dbReference type="ChEBI" id="CHEBI:15378"/>
        <dbReference type="ChEBI" id="CHEBI:30013"/>
        <dbReference type="ChEBI" id="CHEBI:30616"/>
        <dbReference type="ChEBI" id="CHEBI:61977"/>
        <dbReference type="ChEBI" id="CHEBI:456216"/>
        <dbReference type="EC" id="2.7.11.1"/>
    </reaction>
</comment>
<comment type="subunit">
    <text>Homodimer.</text>
</comment>
<comment type="subcellular location">
    <subcellularLocation>
        <location evidence="5">Membrane</location>
        <topology evidence="5">Single-pass type I membrane protein</topology>
    </subcellularLocation>
</comment>
<comment type="tissue specificity">
    <text evidence="4">Expressed in roots, leaves, especially in trichomes, shoot apical meristems (SAM), and, to a lower extent, in floral buds.</text>
</comment>
<comment type="similarity">
    <text evidence="2">Belongs to the protein kinase superfamily. Ser/Thr protein kinase family.</text>
</comment>
<name>ACCR4_ARATH</name>
<protein>
    <recommendedName>
        <fullName>Serine/threonine-protein kinase-like protein CCR4</fullName>
        <ecNumber>2.7.11.1</ecNumber>
    </recommendedName>
    <alternativeName>
        <fullName>CRINKLY 4-related kinase 1</fullName>
        <shortName>AtCRK1</shortName>
    </alternativeName>
    <alternativeName>
        <fullName>Protein CRINKLY 4 RELATED 4</fullName>
        <shortName>AtCCR4</shortName>
    </alternativeName>
</protein>
<keyword id="KW-0067">ATP-binding</keyword>
<keyword id="KW-0325">Glycoprotein</keyword>
<keyword id="KW-0418">Kinase</keyword>
<keyword id="KW-0472">Membrane</keyword>
<keyword id="KW-0547">Nucleotide-binding</keyword>
<keyword id="KW-0675">Receptor</keyword>
<keyword id="KW-1185">Reference proteome</keyword>
<keyword id="KW-0723">Serine/threonine-protein kinase</keyword>
<keyword id="KW-0732">Signal</keyword>
<keyword id="KW-0808">Transferase</keyword>
<keyword id="KW-0812">Transmembrane</keyword>
<keyword id="KW-1133">Transmembrane helix</keyword>
<gene>
    <name type="primary">CCR4</name>
    <name type="synonym">CRK1</name>
    <name type="ordered locus">At5g47850</name>
    <name type="ORF">MCA23.19</name>
</gene>